<evidence type="ECO:0000250" key="1">
    <source>
        <dbReference type="UniProtKB" id="P03354"/>
    </source>
</evidence>
<evidence type="ECO:0000250" key="2">
    <source>
        <dbReference type="UniProtKB" id="P03365"/>
    </source>
</evidence>
<evidence type="ECO:0000250" key="3">
    <source>
        <dbReference type="UniProtKB" id="P07567"/>
    </source>
</evidence>
<evidence type="ECO:0000250" key="4">
    <source>
        <dbReference type="UniProtKB" id="P07570"/>
    </source>
</evidence>
<evidence type="ECO:0000250" key="5">
    <source>
        <dbReference type="UniProtKB" id="P07572"/>
    </source>
</evidence>
<evidence type="ECO:0000250" key="6">
    <source>
        <dbReference type="UniProtKB" id="P10258"/>
    </source>
</evidence>
<evidence type="ECO:0000250" key="7">
    <source>
        <dbReference type="UniProtKB" id="P11283"/>
    </source>
</evidence>
<evidence type="ECO:0000255" key="8">
    <source>
        <dbReference type="PROSITE-ProRule" id="PRU00047"/>
    </source>
</evidence>
<evidence type="ECO:0000255" key="9">
    <source>
        <dbReference type="PROSITE-ProRule" id="PRU00092"/>
    </source>
</evidence>
<evidence type="ECO:0000255" key="10">
    <source>
        <dbReference type="PROSITE-ProRule" id="PRU00275"/>
    </source>
</evidence>
<evidence type="ECO:0000255" key="11">
    <source>
        <dbReference type="PROSITE-ProRule" id="PRU00405"/>
    </source>
</evidence>
<evidence type="ECO:0000255" key="12">
    <source>
        <dbReference type="PROSITE-ProRule" id="PRU00408"/>
    </source>
</evidence>
<evidence type="ECO:0000255" key="13">
    <source>
        <dbReference type="PROSITE-ProRule" id="PRU00450"/>
    </source>
</evidence>
<evidence type="ECO:0000255" key="14">
    <source>
        <dbReference type="PROSITE-ProRule" id="PRU00457"/>
    </source>
</evidence>
<evidence type="ECO:0000255" key="15">
    <source>
        <dbReference type="PROSITE-ProRule" id="PRU00506"/>
    </source>
</evidence>
<evidence type="ECO:0000256" key="16">
    <source>
        <dbReference type="SAM" id="MobiDB-lite"/>
    </source>
</evidence>
<evidence type="ECO:0000305" key="17"/>
<evidence type="ECO:0000305" key="18">
    <source>
    </source>
</evidence>
<evidence type="ECO:0000305" key="19">
    <source>
    </source>
</evidence>
<protein>
    <recommendedName>
        <fullName>Gag-Pro-Pol polyprotein</fullName>
    </recommendedName>
    <component>
        <recommendedName>
            <fullName>Matrix protein p10</fullName>
        </recommendedName>
    </component>
    <component>
        <recommendedName>
            <fullName>Phosphorylated protein</fullName>
        </recommendedName>
    </component>
    <component>
        <recommendedName>
            <fullName>p12</fullName>
        </recommendedName>
    </component>
    <component>
        <recommendedName>
            <fullName>Capsid protein p27</fullName>
        </recommendedName>
    </component>
    <component>
        <recommendedName>
            <fullName>Nucleocapsid protein-dUTPase</fullName>
            <shortName>NC-dUTPase</shortName>
            <ecNumber evidence="7">3.6.1.23</ecNumber>
        </recommendedName>
    </component>
    <component>
        <recommendedName>
            <fullName evidence="5">Protease 17 kDa</fullName>
            <ecNumber evidence="10">3.4.23.-</ecNumber>
        </recommendedName>
    </component>
    <component>
        <recommendedName>
            <fullName evidence="5">Protease 13 kDa</fullName>
            <ecNumber evidence="10">3.4.23.-</ecNumber>
        </recommendedName>
    </component>
    <component>
        <recommendedName>
            <fullName evidence="5">G-patch peptide</fullName>
        </recommendedName>
    </component>
    <component>
        <recommendedName>
            <fullName>Reverse transcriptase/ribonuclease H</fullName>
            <shortName>RT</shortName>
            <ecNumber evidence="11">2.7.7.49</ecNumber>
            <ecNumber evidence="11">2.7.7.7</ecNumber>
            <ecNumber evidence="12">3.1.26.4</ecNumber>
        </recommendedName>
    </component>
    <component>
        <recommendedName>
            <fullName>Integrase</fullName>
            <shortName>IN</shortName>
            <ecNumber evidence="7">2.7.7.-</ecNumber>
            <ecNumber evidence="7">3.1.-.-</ecNumber>
        </recommendedName>
    </component>
</protein>
<reference key="1">
    <citation type="journal article" date="1992" name="J. Virol.">
        <title>Nucleotide sequence of the jaagsiekte retrovirus, an exogenous and endogenous type D and B retrovirus of sheep and goats.</title>
        <authorList>
            <person name="York D.F."/>
            <person name="Vigne R."/>
            <person name="Verwoerd D.W."/>
            <person name="Querat G."/>
        </authorList>
    </citation>
    <scope>NUCLEOTIDE SEQUENCE [GENOMIC RNA]</scope>
    <source>
        <strain>JSRV-SA</strain>
    </source>
</reference>
<reference key="2">
    <citation type="journal article" date="2013" name="Biomed. Res. Int.">
        <title>A genome-wide analysis of RNA pseudoknots that stimulate efficient -1 ribosomal frameshifting or readthrough in animal viruses.</title>
        <authorList>
            <person name="Huang X."/>
            <person name="Cheng Q."/>
            <person name="Du Z."/>
        </authorList>
    </citation>
    <scope>RIBOSOMAL FRAMESHIFT</scope>
</reference>
<reference key="3">
    <citation type="journal article" date="2017" name="Curr. Opin. Struct. Biol.">
        <title>Retroviral intasomes arising.</title>
        <authorList>
            <person name="Engelman A.N."/>
            <person name="Cherepanov P."/>
        </authorList>
    </citation>
    <scope>REVIEW (INTEGRASE)</scope>
</reference>
<organismHost>
    <name type="scientific">Ovis aries</name>
    <name type="common">Sheep</name>
    <dbReference type="NCBI Taxonomy" id="9940"/>
</organismHost>
<organism>
    <name type="scientific">Sheep pulmonary adenomatosis virus</name>
    <name type="common">Jaagsiekte sheep retrovirus</name>
    <name type="synonym">JSRV</name>
    <dbReference type="NCBI Taxonomy" id="11746"/>
    <lineage>
        <taxon>Viruses</taxon>
        <taxon>Riboviria</taxon>
        <taxon>Pararnavirae</taxon>
        <taxon>Artverviricota</taxon>
        <taxon>Revtraviricetes</taxon>
        <taxon>Ortervirales</taxon>
        <taxon>Retroviridae</taxon>
        <taxon>Orthoretrovirinae</taxon>
        <taxon>Betaretrovirus</taxon>
    </lineage>
</organism>
<keyword id="KW-0064">Aspartyl protease</keyword>
<keyword id="KW-0229">DNA integration</keyword>
<keyword id="KW-0233">DNA recombination</keyword>
<keyword id="KW-0238">DNA-binding</keyword>
<keyword id="KW-0239">DNA-directed DNA polymerase</keyword>
<keyword id="KW-0255">Endonuclease</keyword>
<keyword id="KW-0378">Hydrolase</keyword>
<keyword id="KW-0449">Lipoprotein</keyword>
<keyword id="KW-0460">Magnesium</keyword>
<keyword id="KW-0479">Metal-binding</keyword>
<keyword id="KW-0511">Multifunctional enzyme</keyword>
<keyword id="KW-0519">Myristate</keyword>
<keyword id="KW-0540">Nuclease</keyword>
<keyword id="KW-0548">Nucleotidyltransferase</keyword>
<keyword id="KW-0645">Protease</keyword>
<keyword id="KW-0677">Repeat</keyword>
<keyword id="KW-0688">Ribosomal frameshifting</keyword>
<keyword id="KW-0694">RNA-binding</keyword>
<keyword id="KW-0695">RNA-directed DNA polymerase</keyword>
<keyword id="KW-0808">Transferase</keyword>
<keyword id="KW-1179">Viral genome integration</keyword>
<keyword id="KW-0468">Viral matrix protein</keyword>
<keyword id="KW-0543">Viral nucleoprotein</keyword>
<keyword id="KW-0946">Virion</keyword>
<keyword id="KW-1160">Virus entry into host cell</keyword>
<keyword id="KW-0862">Zinc</keyword>
<keyword id="KW-0863">Zinc-finger</keyword>
<name>POL_JSRV</name>
<sequence length="1726" mass="193421">MGHTHSRQLFVHMLSVMLKHRGITVSKTKLINFLSFIEEVCPWFPREGTVNLETWKKVGEQIRTHYTLHGPEKVPVETLSFWTLIRDCLDFDNDELKRLGNLLKQEEDPLHTPDSVPSYDPPPPPPPSLKMHPSDNDDSLSSTDEAELDEEAAKYHQEDWGFLAQEKGALTSKDELVECFKNLTIALQNAGIQLPSNNNTFPSAPPFPPAYTPTVMAGLDPPPGFPPPSKHMSPLQKALRQAQRLGEVVSDFSLAFPVFENNNQRYYESLPFKQLKELKIACSQYGPTAPFTIAMIESLGTQALPPNDWKQTARACLSGGDYLLWKSEFFEQCARIADVNRQQGIQTSYEMLIGEGPYQATDTQLNFLPGAYAQISNAARQAWKKLPSSSTKTEDLSKVRQGPDEPYQDFVARLLDTIGKIMSDEKAGMVLAKQLAFENANSACQAALRPYRKKGDLSDFIRICADIGPSYMQGIAMAAALQGKSIKEVLFQQQARNKKGLQKSGNSGCFVCGQPGHRAAVCPQKHQTSVNTPNLCPRCKKGKHWARDCRSKTDVQGNPLPPVSGNLGEGPAPGPETMLWGNTAGSKRTIADLCRATRGSAGLDLCATSYTVLTPEMGVQTLATGVFGPLPPGTVGLLLGRSSASLKGILIHPGVIDSDYTGEIKILASAPNKIIVINAGQRIAQLLLVPLVIQGKTINRDRQDKGFGSSDAYWVQNVTEARPELELRINANFFRGVLDTGADISVISDKYWPTTWPKQMAISTLQGIGQTTNPEQSSSLLTWKDKDGHTGQFKPYILPYLPVNLWGRDILSKMGVYLYSPSPTVTDLMLDQGLLPNQGLGKQHQGIILPLDLKPNQDRKGLGCFPLGTSDSPVTHADPIDWKSEEPVWVDQWPLTQEKLSAAQQLVQEQLRLGHIEPSTSAWNSPIFVIKKKSGKWRLLQDLRKVNETMMHMGALQPGLPTPSAIPDKSYIIVIDLKDCFYTIPLAPQDCKRFAFSLPSVNFKEPMQRYQWRVLPQGMTNSPTLCQKFVATAIAPVRQRFPQLYLVHYMDDILLAHTDEHLLYQAFSILKQHLSLNGLVIADEKIQTHFPYNYLGFSLYPRVYNTQLVKLQTDHLKTLNDFQKLLGDINWIRPYLKLPTYTLQPLFDILKGDSDPASPRTLSLEGRTALQSIEEAIRQQQITYCDYQRSWGLYILPTPRAPTGVLYQDKPLRWIYLSATPTKHLLPYYELVAKIIAKGRHEAIQYFGMEPPFICVPYALEQQDWLFQFSDNWSIAFANYPGQITHHYPSDKLLQFASSHAFIFPKIVRRQPIPEATLIFTDGSSNGTAALIINHQTYYAQTSFSSAQVVELFAVHQALLTVPTSFNLFTDSSYVVGALQMIETVPIIGTTSPEVLNLFTLIQQVLHCRQHPCFFGHIRAHSTLPGALVQGNHTADVLTKQVFFQSAIDAARKSHDLHHQNSHSLRLQFKISREAARQIVKSCSTCPQFFVLPQYGVNPRGLRPNHLWQTDVTHIPQFGRLKYVHVSIDTFSNFLMASLHTGESTRHCIQHLLFCFSTSGIPQTLKTDNGPGYTSRSFQRFCLSFQIHHKTGIPYNPQGQGIVERAHQRIKHQLLKQKKGNELYSPSPHNALNHALYVLNFLTLDTEGNSAAQRFWGERSSCKKPLVRWKDPLTNLWYGPDPVLIWGRGHVCVFPQDAEAPRWIPERLVRAAEELPDASDATHDPE</sequence>
<dbReference type="EC" id="3.6.1.23" evidence="7"/>
<dbReference type="EC" id="3.4.23.-" evidence="10"/>
<dbReference type="EC" id="2.7.7.49" evidence="11"/>
<dbReference type="EC" id="2.7.7.7" evidence="11"/>
<dbReference type="EC" id="3.1.26.4" evidence="12"/>
<dbReference type="EC" id="2.7.7.-" evidence="7"/>
<dbReference type="EC" id="3.1.-.-" evidence="7"/>
<dbReference type="EMBL" id="M80216">
    <property type="protein sequence ID" value="AAA89182.1"/>
    <property type="status" value="ALT_INIT"/>
    <property type="molecule type" value="Genomic_RNA"/>
</dbReference>
<dbReference type="PIR" id="C42740">
    <property type="entry name" value="GNMVJA"/>
</dbReference>
<dbReference type="RefSeq" id="NP_041186.1">
    <property type="nucleotide sequence ID" value="NC_001494.1"/>
</dbReference>
<dbReference type="SMR" id="P31623"/>
<dbReference type="GeneID" id="1490020"/>
<dbReference type="KEGG" id="vg:1490020"/>
<dbReference type="Proteomes" id="UP000007215">
    <property type="component" value="Genome"/>
</dbReference>
<dbReference type="GO" id="GO:0019013">
    <property type="term" value="C:viral nucleocapsid"/>
    <property type="evidence" value="ECO:0007669"/>
    <property type="project" value="UniProtKB-KW"/>
</dbReference>
<dbReference type="GO" id="GO:0004190">
    <property type="term" value="F:aspartic-type endopeptidase activity"/>
    <property type="evidence" value="ECO:0007669"/>
    <property type="project" value="UniProtKB-KW"/>
</dbReference>
<dbReference type="GO" id="GO:0003677">
    <property type="term" value="F:DNA binding"/>
    <property type="evidence" value="ECO:0007669"/>
    <property type="project" value="UniProtKB-KW"/>
</dbReference>
<dbReference type="GO" id="GO:0003887">
    <property type="term" value="F:DNA-directed DNA polymerase activity"/>
    <property type="evidence" value="ECO:0007669"/>
    <property type="project" value="UniProtKB-KW"/>
</dbReference>
<dbReference type="GO" id="GO:0004170">
    <property type="term" value="F:dUTP diphosphatase activity"/>
    <property type="evidence" value="ECO:0007669"/>
    <property type="project" value="UniProtKB-EC"/>
</dbReference>
<dbReference type="GO" id="GO:0035613">
    <property type="term" value="F:RNA stem-loop binding"/>
    <property type="evidence" value="ECO:0007669"/>
    <property type="project" value="TreeGrafter"/>
</dbReference>
<dbReference type="GO" id="GO:0003964">
    <property type="term" value="F:RNA-directed DNA polymerase activity"/>
    <property type="evidence" value="ECO:0007669"/>
    <property type="project" value="UniProtKB-KW"/>
</dbReference>
<dbReference type="GO" id="GO:0004523">
    <property type="term" value="F:RNA-DNA hybrid ribonuclease activity"/>
    <property type="evidence" value="ECO:0007669"/>
    <property type="project" value="UniProtKB-EC"/>
</dbReference>
<dbReference type="GO" id="GO:0039660">
    <property type="term" value="F:structural constituent of virion"/>
    <property type="evidence" value="ECO:0007669"/>
    <property type="project" value="UniProtKB-KW"/>
</dbReference>
<dbReference type="GO" id="GO:0008270">
    <property type="term" value="F:zinc ion binding"/>
    <property type="evidence" value="ECO:0007669"/>
    <property type="project" value="UniProtKB-KW"/>
</dbReference>
<dbReference type="GO" id="GO:0015074">
    <property type="term" value="P:DNA integration"/>
    <property type="evidence" value="ECO:0007669"/>
    <property type="project" value="UniProtKB-KW"/>
</dbReference>
<dbReference type="GO" id="GO:0006310">
    <property type="term" value="P:DNA recombination"/>
    <property type="evidence" value="ECO:0007669"/>
    <property type="project" value="UniProtKB-KW"/>
</dbReference>
<dbReference type="GO" id="GO:0075713">
    <property type="term" value="P:establishment of integrated proviral latency"/>
    <property type="evidence" value="ECO:0007669"/>
    <property type="project" value="UniProtKB-KW"/>
</dbReference>
<dbReference type="GO" id="GO:0006508">
    <property type="term" value="P:proteolysis"/>
    <property type="evidence" value="ECO:0007669"/>
    <property type="project" value="UniProtKB-KW"/>
</dbReference>
<dbReference type="GO" id="GO:0046718">
    <property type="term" value="P:symbiont entry into host cell"/>
    <property type="evidence" value="ECO:0007669"/>
    <property type="project" value="UniProtKB-KW"/>
</dbReference>
<dbReference type="GO" id="GO:0044826">
    <property type="term" value="P:viral genome integration into host DNA"/>
    <property type="evidence" value="ECO:0007669"/>
    <property type="project" value="UniProtKB-KW"/>
</dbReference>
<dbReference type="GO" id="GO:0075523">
    <property type="term" value="P:viral translational frameshifting"/>
    <property type="evidence" value="ECO:0007669"/>
    <property type="project" value="UniProtKB-KW"/>
</dbReference>
<dbReference type="CDD" id="cd05482">
    <property type="entry name" value="HIV_retropepsin_like"/>
    <property type="match status" value="1"/>
</dbReference>
<dbReference type="CDD" id="cd09273">
    <property type="entry name" value="RNase_HI_RT_Bel"/>
    <property type="match status" value="1"/>
</dbReference>
<dbReference type="CDD" id="cd01645">
    <property type="entry name" value="RT_Rtv"/>
    <property type="match status" value="1"/>
</dbReference>
<dbReference type="CDD" id="cd07557">
    <property type="entry name" value="trimeric_dUTPase"/>
    <property type="match status" value="1"/>
</dbReference>
<dbReference type="Gene3D" id="1.10.10.200">
    <property type="match status" value="1"/>
</dbReference>
<dbReference type="Gene3D" id="1.10.1200.30">
    <property type="match status" value="1"/>
</dbReference>
<dbReference type="Gene3D" id="2.70.40.10">
    <property type="match status" value="1"/>
</dbReference>
<dbReference type="Gene3D" id="3.30.70.270">
    <property type="match status" value="2"/>
</dbReference>
<dbReference type="Gene3D" id="2.40.70.10">
    <property type="entry name" value="Acid Proteases"/>
    <property type="match status" value="1"/>
</dbReference>
<dbReference type="Gene3D" id="3.10.10.10">
    <property type="entry name" value="HIV Type 1 Reverse Transcriptase, subunit A, domain 1"/>
    <property type="match status" value="1"/>
</dbReference>
<dbReference type="Gene3D" id="1.10.375.10">
    <property type="entry name" value="Human Immunodeficiency Virus Type 1 Capsid Protein"/>
    <property type="match status" value="1"/>
</dbReference>
<dbReference type="Gene3D" id="2.30.30.10">
    <property type="entry name" value="Integrase, C-terminal domain superfamily, retroviral"/>
    <property type="match status" value="1"/>
</dbReference>
<dbReference type="Gene3D" id="1.10.150.490">
    <property type="entry name" value="Retroviral GAG p10 protein"/>
    <property type="match status" value="1"/>
</dbReference>
<dbReference type="Gene3D" id="3.30.420.10">
    <property type="entry name" value="Ribonuclease H-like superfamily/Ribonuclease H"/>
    <property type="match status" value="2"/>
</dbReference>
<dbReference type="Gene3D" id="4.10.60.10">
    <property type="entry name" value="Zinc finger, CCHC-type"/>
    <property type="match status" value="1"/>
</dbReference>
<dbReference type="InterPro" id="IPR001969">
    <property type="entry name" value="Aspartic_peptidase_AS"/>
</dbReference>
<dbReference type="InterPro" id="IPR003322">
    <property type="entry name" value="B_retro_matrix"/>
</dbReference>
<dbReference type="InterPro" id="IPR038124">
    <property type="entry name" value="B_retro_matrix_sf"/>
</dbReference>
<dbReference type="InterPro" id="IPR043502">
    <property type="entry name" value="DNA/RNA_pol_sf"/>
</dbReference>
<dbReference type="InterPro" id="IPR029054">
    <property type="entry name" value="dUTPase-like"/>
</dbReference>
<dbReference type="InterPro" id="IPR036157">
    <property type="entry name" value="dUTPase-like_sf"/>
</dbReference>
<dbReference type="InterPro" id="IPR033704">
    <property type="entry name" value="dUTPase_trimeric"/>
</dbReference>
<dbReference type="InterPro" id="IPR000467">
    <property type="entry name" value="G_patch_dom"/>
</dbReference>
<dbReference type="InterPro" id="IPR045345">
    <property type="entry name" value="Gag_p24_C"/>
</dbReference>
<dbReference type="InterPro" id="IPR017856">
    <property type="entry name" value="Integrase-like_N"/>
</dbReference>
<dbReference type="InterPro" id="IPR036862">
    <property type="entry name" value="Integrase_C_dom_sf_retrovir"/>
</dbReference>
<dbReference type="InterPro" id="IPR001037">
    <property type="entry name" value="Integrase_C_retrovir"/>
</dbReference>
<dbReference type="InterPro" id="IPR001584">
    <property type="entry name" value="Integrase_cat-core"/>
</dbReference>
<dbReference type="InterPro" id="IPR003308">
    <property type="entry name" value="Integrase_Zn-bd_dom_N"/>
</dbReference>
<dbReference type="InterPro" id="IPR001995">
    <property type="entry name" value="Peptidase_A2_cat"/>
</dbReference>
<dbReference type="InterPro" id="IPR021109">
    <property type="entry name" value="Peptidase_aspartic_dom_sf"/>
</dbReference>
<dbReference type="InterPro" id="IPR034170">
    <property type="entry name" value="Retropepsin-like_cat_dom"/>
</dbReference>
<dbReference type="InterPro" id="IPR018061">
    <property type="entry name" value="Retropepsins"/>
</dbReference>
<dbReference type="InterPro" id="IPR008916">
    <property type="entry name" value="Retrov_capsid_C"/>
</dbReference>
<dbReference type="InterPro" id="IPR008919">
    <property type="entry name" value="Retrov_capsid_N"/>
</dbReference>
<dbReference type="InterPro" id="IPR010999">
    <property type="entry name" value="Retrovr_matrix"/>
</dbReference>
<dbReference type="InterPro" id="IPR043128">
    <property type="entry name" value="Rev_trsase/Diguanyl_cyclase"/>
</dbReference>
<dbReference type="InterPro" id="IPR012337">
    <property type="entry name" value="RNaseH-like_sf"/>
</dbReference>
<dbReference type="InterPro" id="IPR002156">
    <property type="entry name" value="RNaseH_domain"/>
</dbReference>
<dbReference type="InterPro" id="IPR036397">
    <property type="entry name" value="RNaseH_sf"/>
</dbReference>
<dbReference type="InterPro" id="IPR000477">
    <property type="entry name" value="RT_dom"/>
</dbReference>
<dbReference type="InterPro" id="IPR010661">
    <property type="entry name" value="RVT_thumb"/>
</dbReference>
<dbReference type="InterPro" id="IPR001878">
    <property type="entry name" value="Znf_CCHC"/>
</dbReference>
<dbReference type="InterPro" id="IPR036875">
    <property type="entry name" value="Znf_CCHC_sf"/>
</dbReference>
<dbReference type="PANTHER" id="PTHR41694">
    <property type="entry name" value="ENDOGENOUS RETROVIRUS GROUP K MEMBER POL PROTEIN"/>
    <property type="match status" value="1"/>
</dbReference>
<dbReference type="PANTHER" id="PTHR41694:SF3">
    <property type="entry name" value="RNA-DIRECTED DNA POLYMERASE-RELATED"/>
    <property type="match status" value="1"/>
</dbReference>
<dbReference type="Pfam" id="PF00692">
    <property type="entry name" value="dUTPase"/>
    <property type="match status" value="1"/>
</dbReference>
<dbReference type="Pfam" id="PF01585">
    <property type="entry name" value="G-patch"/>
    <property type="match status" value="1"/>
</dbReference>
<dbReference type="Pfam" id="PF02337">
    <property type="entry name" value="Gag_p10"/>
    <property type="match status" value="1"/>
</dbReference>
<dbReference type="Pfam" id="PF00607">
    <property type="entry name" value="Gag_p24"/>
    <property type="match status" value="1"/>
</dbReference>
<dbReference type="Pfam" id="PF19317">
    <property type="entry name" value="Gag_p24_C"/>
    <property type="match status" value="1"/>
</dbReference>
<dbReference type="Pfam" id="PF00552">
    <property type="entry name" value="IN_DBD_C"/>
    <property type="match status" value="1"/>
</dbReference>
<dbReference type="Pfam" id="PF02022">
    <property type="entry name" value="Integrase_Zn"/>
    <property type="match status" value="1"/>
</dbReference>
<dbReference type="Pfam" id="PF00075">
    <property type="entry name" value="RNase_H"/>
    <property type="match status" value="1"/>
</dbReference>
<dbReference type="Pfam" id="PF00665">
    <property type="entry name" value="rve"/>
    <property type="match status" value="1"/>
</dbReference>
<dbReference type="Pfam" id="PF00077">
    <property type="entry name" value="RVP"/>
    <property type="match status" value="1"/>
</dbReference>
<dbReference type="Pfam" id="PF00078">
    <property type="entry name" value="RVT_1"/>
    <property type="match status" value="1"/>
</dbReference>
<dbReference type="Pfam" id="PF06817">
    <property type="entry name" value="RVT_thumb"/>
    <property type="match status" value="1"/>
</dbReference>
<dbReference type="Pfam" id="PF00098">
    <property type="entry name" value="zf-CCHC"/>
    <property type="match status" value="1"/>
</dbReference>
<dbReference type="Pfam" id="PF14787">
    <property type="entry name" value="zf-CCHC_5"/>
    <property type="match status" value="1"/>
</dbReference>
<dbReference type="SMART" id="SM00443">
    <property type="entry name" value="G_patch"/>
    <property type="match status" value="1"/>
</dbReference>
<dbReference type="SMART" id="SM00343">
    <property type="entry name" value="ZnF_C2HC"/>
    <property type="match status" value="2"/>
</dbReference>
<dbReference type="SUPFAM" id="SSF50630">
    <property type="entry name" value="Acid proteases"/>
    <property type="match status" value="1"/>
</dbReference>
<dbReference type="SUPFAM" id="SSF50122">
    <property type="entry name" value="DNA-binding domain of retroviral integrase"/>
    <property type="match status" value="1"/>
</dbReference>
<dbReference type="SUPFAM" id="SSF56672">
    <property type="entry name" value="DNA/RNA polymerases"/>
    <property type="match status" value="1"/>
</dbReference>
<dbReference type="SUPFAM" id="SSF51283">
    <property type="entry name" value="dUTPase-like"/>
    <property type="match status" value="1"/>
</dbReference>
<dbReference type="SUPFAM" id="SSF46919">
    <property type="entry name" value="N-terminal Zn binding domain of HIV integrase"/>
    <property type="match status" value="1"/>
</dbReference>
<dbReference type="SUPFAM" id="SSF47836">
    <property type="entry name" value="Retroviral matrix proteins"/>
    <property type="match status" value="1"/>
</dbReference>
<dbReference type="SUPFAM" id="SSF47353">
    <property type="entry name" value="Retrovirus capsid dimerization domain-like"/>
    <property type="match status" value="1"/>
</dbReference>
<dbReference type="SUPFAM" id="SSF47943">
    <property type="entry name" value="Retrovirus capsid protein, N-terminal core domain"/>
    <property type="match status" value="1"/>
</dbReference>
<dbReference type="SUPFAM" id="SSF57756">
    <property type="entry name" value="Retrovirus zinc finger-like domains"/>
    <property type="match status" value="2"/>
</dbReference>
<dbReference type="SUPFAM" id="SSF53098">
    <property type="entry name" value="Ribonuclease H-like"/>
    <property type="match status" value="2"/>
</dbReference>
<dbReference type="PROSITE" id="PS50175">
    <property type="entry name" value="ASP_PROT_RETROV"/>
    <property type="match status" value="1"/>
</dbReference>
<dbReference type="PROSITE" id="PS00141">
    <property type="entry name" value="ASP_PROTEASE"/>
    <property type="match status" value="1"/>
</dbReference>
<dbReference type="PROSITE" id="PS50174">
    <property type="entry name" value="G_PATCH"/>
    <property type="match status" value="1"/>
</dbReference>
<dbReference type="PROSITE" id="PS50994">
    <property type="entry name" value="INTEGRASE"/>
    <property type="match status" value="1"/>
</dbReference>
<dbReference type="PROSITE" id="PS51027">
    <property type="entry name" value="INTEGRASE_DBD"/>
    <property type="match status" value="1"/>
</dbReference>
<dbReference type="PROSITE" id="PS50879">
    <property type="entry name" value="RNASE_H_1"/>
    <property type="match status" value="1"/>
</dbReference>
<dbReference type="PROSITE" id="PS50878">
    <property type="entry name" value="RT_POL"/>
    <property type="match status" value="1"/>
</dbReference>
<dbReference type="PROSITE" id="PS50158">
    <property type="entry name" value="ZF_CCHC"/>
    <property type="match status" value="1"/>
</dbReference>
<dbReference type="PROSITE" id="PS50876">
    <property type="entry name" value="ZF_INTEGRASE"/>
    <property type="match status" value="1"/>
</dbReference>
<feature type="initiator methionine" description="Removed; by host" evidence="5">
    <location>
        <position position="1"/>
    </location>
</feature>
<feature type="chain" id="PRO_0000125490" description="Gag-Pro-Pol polyprotein">
    <location>
        <begin position="2"/>
        <end position="1726"/>
    </location>
</feature>
<feature type="chain" id="PRO_0000443130" description="Matrix protein p10">
    <location>
        <begin position="2"/>
        <end position="99"/>
    </location>
</feature>
<feature type="chain" id="PRO_0000443131" description="Phosphorylated protein">
    <location>
        <begin position="100"/>
        <end position="167"/>
    </location>
</feature>
<feature type="chain" id="PRO_0000443132" description="p12">
    <location>
        <begin position="168"/>
        <end position="256"/>
    </location>
</feature>
<feature type="chain" id="PRO_0000443133" description="Capsid protein p27">
    <location>
        <begin position="257"/>
        <end position="477"/>
    </location>
</feature>
<feature type="chain" id="PRO_0000443134" description="Nucleocapsid protein-dUTPase">
    <location>
        <begin position="478"/>
        <end position="713"/>
    </location>
</feature>
<feature type="chain" id="PRO_0000443135" description="Protease 17 kDa">
    <location>
        <begin position="714"/>
        <end position="865"/>
    </location>
</feature>
<feature type="chain" id="PRO_0000443136" description="Protease 13 kDa">
    <location>
        <begin position="714"/>
        <end position="831"/>
    </location>
</feature>
<feature type="peptide" id="PRO_0000443137" description="G-patch peptide">
    <location>
        <begin position="832"/>
        <end position="865"/>
    </location>
</feature>
<feature type="chain" id="PRO_0000434769" description="Reverse transcriptase/ribonuclease H">
    <location>
        <begin position="866"/>
        <end position="1446"/>
    </location>
</feature>
<feature type="chain" id="PRO_0000434770" description="Integrase">
    <location>
        <begin position="1447"/>
        <end position="1726"/>
    </location>
</feature>
<feature type="domain" description="Peptidase A2" evidence="10">
    <location>
        <begin position="734"/>
        <end position="810"/>
    </location>
</feature>
<feature type="domain" description="G-patch" evidence="9">
    <location>
        <begin position="821"/>
        <end position="866"/>
    </location>
</feature>
<feature type="domain" description="Reverse transcriptase" evidence="11">
    <location>
        <begin position="911"/>
        <end position="1099"/>
    </location>
</feature>
<feature type="domain" description="RNase H type-1" evidence="12">
    <location>
        <begin position="1313"/>
        <end position="1444"/>
    </location>
</feature>
<feature type="domain" description="Integrase catalytic" evidence="14">
    <location>
        <begin position="1500"/>
        <end position="1659"/>
    </location>
</feature>
<feature type="zinc finger region" description="CCHC-type" evidence="8">
    <location>
        <begin position="507"/>
        <end position="524"/>
    </location>
</feature>
<feature type="zinc finger region" description="Integrase-type" evidence="13">
    <location>
        <begin position="1446"/>
        <end position="1487"/>
    </location>
</feature>
<feature type="DNA-binding region" description="Integrase-type" evidence="15">
    <location>
        <begin position="1665"/>
        <end position="1714"/>
    </location>
</feature>
<feature type="region of interest" description="Disordered" evidence="16">
    <location>
        <begin position="103"/>
        <end position="148"/>
    </location>
</feature>
<feature type="region of interest" description="Disordered" evidence="16">
    <location>
        <begin position="550"/>
        <end position="570"/>
    </location>
</feature>
<feature type="short sequence motif" description="PTAP/PSAP motif" evidence="17">
    <location>
        <begin position="202"/>
        <end position="205"/>
    </location>
</feature>
<feature type="short sequence motif" description="PPXY motif" evidence="17">
    <location>
        <begin position="208"/>
        <end position="211"/>
    </location>
</feature>
<feature type="short sequence motif" description="PTAP/PSAP motif" evidence="6">
    <location>
        <begin position="287"/>
        <end position="290"/>
    </location>
</feature>
<feature type="compositionally biased region" description="Pro residues" evidence="16">
    <location>
        <begin position="119"/>
        <end position="128"/>
    </location>
</feature>
<feature type="active site" description="Protease; shared with dimeric partner" evidence="10">
    <location>
        <position position="739"/>
    </location>
</feature>
<feature type="binding site" evidence="11">
    <location>
        <position position="976"/>
    </location>
    <ligand>
        <name>Mg(2+)</name>
        <dbReference type="ChEBI" id="CHEBI:18420"/>
        <label>1</label>
        <note>catalytic; for reverse transcriptase activity</note>
    </ligand>
</feature>
<feature type="binding site" evidence="11">
    <location>
        <position position="1051"/>
    </location>
    <ligand>
        <name>Mg(2+)</name>
        <dbReference type="ChEBI" id="CHEBI:18420"/>
        <label>1</label>
        <note>catalytic; for reverse transcriptase activity</note>
    </ligand>
</feature>
<feature type="binding site" evidence="11">
    <location>
        <position position="1052"/>
    </location>
    <ligand>
        <name>Mg(2+)</name>
        <dbReference type="ChEBI" id="CHEBI:18420"/>
        <label>1</label>
        <note>catalytic; for reverse transcriptase activity</note>
    </ligand>
</feature>
<feature type="binding site" evidence="12">
    <location>
        <position position="1322"/>
    </location>
    <ligand>
        <name>Mg(2+)</name>
        <dbReference type="ChEBI" id="CHEBI:18420"/>
        <label>2</label>
        <note>for RNase H activity</note>
    </ligand>
</feature>
<feature type="binding site" evidence="12">
    <location>
        <position position="1351"/>
    </location>
    <ligand>
        <name>Mg(2+)</name>
        <dbReference type="ChEBI" id="CHEBI:18420"/>
        <label>2</label>
        <note>for RNase H activity</note>
    </ligand>
</feature>
<feature type="binding site" evidence="12">
    <location>
        <position position="1371"/>
    </location>
    <ligand>
        <name>Mg(2+)</name>
        <dbReference type="ChEBI" id="CHEBI:18420"/>
        <label>2</label>
        <note>for RNase H activity</note>
    </ligand>
</feature>
<feature type="binding site" evidence="12">
    <location>
        <position position="1436"/>
    </location>
    <ligand>
        <name>Mg(2+)</name>
        <dbReference type="ChEBI" id="CHEBI:18420"/>
        <label>2</label>
        <note>for RNase H activity</note>
    </ligand>
</feature>
<feature type="binding site" evidence="13">
    <location>
        <position position="1455"/>
    </location>
    <ligand>
        <name>Zn(2+)</name>
        <dbReference type="ChEBI" id="CHEBI:29105"/>
    </ligand>
</feature>
<feature type="binding site" evidence="13">
    <location>
        <position position="1459"/>
    </location>
    <ligand>
        <name>Zn(2+)</name>
        <dbReference type="ChEBI" id="CHEBI:29105"/>
    </ligand>
</feature>
<feature type="binding site" evidence="13">
    <location>
        <position position="1483"/>
    </location>
    <ligand>
        <name>Zn(2+)</name>
        <dbReference type="ChEBI" id="CHEBI:29105"/>
    </ligand>
</feature>
<feature type="binding site" evidence="13">
    <location>
        <position position="1486"/>
    </location>
    <ligand>
        <name>Zn(2+)</name>
        <dbReference type="ChEBI" id="CHEBI:29105"/>
    </ligand>
</feature>
<feature type="binding site" evidence="14">
    <location>
        <position position="1511"/>
    </location>
    <ligand>
        <name>Mg(2+)</name>
        <dbReference type="ChEBI" id="CHEBI:18420"/>
        <label>3</label>
        <note>catalytic; for integrase activity</note>
    </ligand>
</feature>
<feature type="binding site" evidence="14">
    <location>
        <position position="1568"/>
    </location>
    <ligand>
        <name>Mg(2+)</name>
        <dbReference type="ChEBI" id="CHEBI:18420"/>
        <label>3</label>
        <note>catalytic; for integrase activity</note>
    </ligand>
</feature>
<feature type="binding site" evidence="1">
    <location>
        <position position="1604"/>
    </location>
    <ligand>
        <name>Mg(2+)</name>
        <dbReference type="ChEBI" id="CHEBI:18420"/>
        <label>3</label>
        <note>catalytic; for integrase activity</note>
    </ligand>
</feature>
<feature type="site" description="Cleavage; by viral protease" evidence="3">
    <location>
        <begin position="99"/>
        <end position="100"/>
    </location>
</feature>
<feature type="site" description="Cleavage; by viral protease" evidence="3">
    <location>
        <begin position="256"/>
        <end position="257"/>
    </location>
</feature>
<feature type="site" description="Cleavage; by viral protease" evidence="3">
    <location>
        <begin position="477"/>
        <end position="478"/>
    </location>
</feature>
<feature type="site" description="Cleavage; by viral protease" evidence="5">
    <location>
        <begin position="713"/>
        <end position="714"/>
    </location>
</feature>
<feature type="site" description="Cleavage; by viral protease" evidence="5">
    <location>
        <begin position="831"/>
        <end position="832"/>
    </location>
</feature>
<feature type="site" description="Cleavage; by viral protease" evidence="5">
    <location>
        <begin position="865"/>
        <end position="866"/>
    </location>
</feature>
<feature type="site" description="Cleavage; by viral protease" evidence="2">
    <location>
        <begin position="1446"/>
        <end position="1447"/>
    </location>
</feature>
<feature type="lipid moiety-binding region" description="N-myristoyl glycine; by host" evidence="7">
    <location>
        <position position="2"/>
    </location>
</feature>
<gene>
    <name type="primary">pol</name>
</gene>
<proteinExistence type="inferred from homology"/>
<comment type="function">
    <molecule>Matrix protein p10</molecule>
    <text evidence="5">Matrix protein.</text>
</comment>
<comment type="function">
    <text evidence="5">Nucleocapsid protein p14: Nucleocapsid protein.</text>
</comment>
<comment type="function">
    <molecule>Capsid protein p27</molecule>
    <text evidence="5">Capsid protein.</text>
</comment>
<comment type="function">
    <molecule>Protease 17 kDa</molecule>
    <text evidence="5 10">The aspartyl protease mediates proteolytic cleavages of Gag and Gag-Pol polyproteins during or shortly after the release of the virion from the plasma membrane. Cleavages take place as an ordered, step-wise cascade to yield mature proteins. This process is called maturation. Displays maximal activity during the budding process just prior to particle release from the cell.</text>
</comment>
<comment type="function">
    <molecule>Protease 13 kDa</molecule>
    <text evidence="5 10">The aspartyl protease mediates proteolytic cleavages of Gag and Gag-Pol polyproteins during or shortly after the release of the virion from the plasma membrane. Cleavages take place as an ordered, step-wise cascade to yield mature proteins. This process is called maturation. Displays maximal activity during the budding process just prior to particle release from the cell.</text>
</comment>
<comment type="function">
    <molecule>G-patch peptide</molecule>
    <text evidence="5">Enhances the activity of the reverse transcriptase. May be part of the mature RT.</text>
</comment>
<comment type="function">
    <molecule>Reverse transcriptase/ribonuclease H</molecule>
    <text evidence="11">RT is a multifunctional enzyme that converts the viral dimeric RNA genome into dsDNA in the cytoplasm, shortly after virus entry into the cell. This enzyme displays a DNA polymerase activity that can copy either DNA or RNA templates, and a ribonuclease H (RNase H) activity that cleaves the RNA strand of RNA-DNA heteroduplexes in a partially processive 3' to 5' endonucleasic mode. Conversion of viral genomic RNA into dsDNA requires many steps. A tRNA binds to the primer-binding site (PBS) situated at the 5' end of the viral RNA. RT uses the 3' end of the tRNA primer to perfom a short round of RNA-dependent minus-strand DNA synthesis. The reading proceeds through the U5 region and ends after the repeated (R) region which is present at both ends of viral RNA. The portion of the RNA-DNA heteroduplex is digested by the RNase H, resulting in a ssDNA product attached to the tRNA primer. This ssDNA/tRNA hybridizes with the identical R region situated at the 3' end of viral RNA. This template exchange, known as minus-strand DNA strong stop transfer, can be either intra- or intermolecular. RT uses the 3' end of this newly synthesized short ssDNA to perfom the RNA-dependent minus-strand DNA synthesis of the whole template. RNase H digests the RNA template except for a polypurine tract (PPT) situated at the 5' end of the genome. It is not clear if both polymerase and RNase H activities are simultaneous. RNase H probably can proceed both in a polymerase-dependent (RNA cut into small fragments by the same RT performing DNA synthesis) and a polymerase-independent mode (cleavage of remaining RNA fragments by free RTs). Secondly, RT performs DNA-directed plus-strand DNA synthesis using the PPT that has not been removed by RNase H as primers. PPT and tRNA primers are then removed by RNase H. The 3' and 5' ssDNA PBS regions hybridize to form a circular dsDNA intermediate. Strand displacement synthesis by RT to the PBS and PPT ends produces a blunt ended, linear dsDNA copy of the viral genome that includes long terminal repeats (LTRs) at both ends.</text>
</comment>
<comment type="function">
    <molecule>Integrase</molecule>
    <text evidence="19">Catalyzes viral DNA integration into the host chromosome, by performing a series of DNA cutting and joining reactions.</text>
</comment>
<comment type="catalytic activity">
    <reaction evidence="11">
        <text>DNA(n) + a 2'-deoxyribonucleoside 5'-triphosphate = DNA(n+1) + diphosphate</text>
        <dbReference type="Rhea" id="RHEA:22508"/>
        <dbReference type="Rhea" id="RHEA-COMP:17339"/>
        <dbReference type="Rhea" id="RHEA-COMP:17340"/>
        <dbReference type="ChEBI" id="CHEBI:33019"/>
        <dbReference type="ChEBI" id="CHEBI:61560"/>
        <dbReference type="ChEBI" id="CHEBI:173112"/>
        <dbReference type="EC" id="2.7.7.49"/>
    </reaction>
</comment>
<comment type="catalytic activity">
    <reaction evidence="11">
        <text>DNA(n) + a 2'-deoxyribonucleoside 5'-triphosphate = DNA(n+1) + diphosphate</text>
        <dbReference type="Rhea" id="RHEA:22508"/>
        <dbReference type="Rhea" id="RHEA-COMP:17339"/>
        <dbReference type="Rhea" id="RHEA-COMP:17340"/>
        <dbReference type="ChEBI" id="CHEBI:33019"/>
        <dbReference type="ChEBI" id="CHEBI:61560"/>
        <dbReference type="ChEBI" id="CHEBI:173112"/>
        <dbReference type="EC" id="2.7.7.7"/>
    </reaction>
</comment>
<comment type="catalytic activity">
    <reaction evidence="12">
        <text>Endonucleolytic cleavage to 5'-phosphomonoester.</text>
        <dbReference type="EC" id="3.1.26.4"/>
    </reaction>
</comment>
<comment type="catalytic activity">
    <reaction evidence="4">
        <text>dUTP + H2O = dUMP + diphosphate + H(+)</text>
        <dbReference type="Rhea" id="RHEA:10248"/>
        <dbReference type="ChEBI" id="CHEBI:15377"/>
        <dbReference type="ChEBI" id="CHEBI:15378"/>
        <dbReference type="ChEBI" id="CHEBI:33019"/>
        <dbReference type="ChEBI" id="CHEBI:61555"/>
        <dbReference type="ChEBI" id="CHEBI:246422"/>
        <dbReference type="EC" id="3.6.1.23"/>
    </reaction>
</comment>
<comment type="cofactor">
    <cofactor evidence="11">
        <name>Mg(2+)</name>
        <dbReference type="ChEBI" id="CHEBI:18420"/>
    </cofactor>
    <text evidence="11">The RT polymerase active site binds 2 magnesium ions.</text>
</comment>
<comment type="subunit">
    <molecule>Protease 17 kDa</molecule>
    <text evidence="4">Homodimer.</text>
</comment>
<comment type="subunit">
    <molecule>Reverse transcriptase/ribonuclease H</molecule>
    <text evidence="4">Interacts with the G-patch peptide.</text>
</comment>
<comment type="subunit">
    <molecule>G-patch peptide</molecule>
    <text evidence="4">Interacts with the reverse transcriptase/ribonuclease H.</text>
</comment>
<comment type="subunit">
    <molecule>Nucleocapsid protein-dUTPase</molecule>
    <text evidence="4">Homotrimer.</text>
</comment>
<comment type="subcellular location">
    <molecule>Matrix protein p10</molecule>
    <subcellularLocation>
        <location evidence="5">Virion</location>
    </subcellularLocation>
</comment>
<comment type="subcellular location">
    <molecule>Capsid protein p27</molecule>
    <subcellularLocation>
        <location evidence="5">Virion</location>
    </subcellularLocation>
</comment>
<comment type="subcellular location">
    <molecule>Nucleocapsid protein-dUTPase</molecule>
    <subcellularLocation>
        <location evidence="5">Virion</location>
    </subcellularLocation>
</comment>
<comment type="subcellular location">
    <molecule>Protease 13 kDa</molecule>
    <subcellularLocation>
        <location evidence="5">Virion</location>
    </subcellularLocation>
</comment>
<comment type="subcellular location">
    <molecule>Protease 17 kDa</molecule>
    <subcellularLocation>
        <location evidence="5">Virion</location>
    </subcellularLocation>
</comment>
<comment type="alternative products">
    <event type="ribosomal frameshifting"/>
    <isoform>
        <id>P31623-1</id>
        <name>Gag-Pro-Pol polyprotein</name>
        <sequence type="displayed"/>
    </isoform>
    <isoform>
        <id>P31625-1</id>
        <name>Gag-Pro polyprotein</name>
        <sequence type="external"/>
    </isoform>
    <isoform>
        <id>P31622-1</id>
        <name>Gag polyprotein</name>
        <sequence type="external"/>
    </isoform>
</comment>
<comment type="domain">
    <text evidence="5">Gag polyprotein: Late-budding domains (L domains) are short sequence motifs essential for viral particle release. They can occur individually or in close proximity within structural proteins. They interacts with sorting cellular proteins of the multivesicular body (MVB) pathway. Most of these proteins are class E vacuolar protein sorting factors belonging to ESCRT-I, ESCRT-II or ESCRT-III complexes. Gag-p12 contains two L domains: a PTAP/PSAP motif which interacts with the UEV domain of TSG101, and a PPXY motif which binds to the WW domains of the ubiquitin ligase NEDD4. Gag-p27 contains one L domain: a PTAP/PSAP motif which interacts with the UEV domain of TSG101.</text>
</comment>
<comment type="domain">
    <molecule>Protease 17 kDa</molecule>
    <text evidence="5">The glycine-rich G-patch domain (GPD) is present at the C-terminus of the protease from which it is then detached by the protease itself.</text>
</comment>
<comment type="PTM">
    <molecule>Protease 17 kDa</molecule>
    <text evidence="5">Released by autocatalytic processing. The protease can undergo further autoprocessing to yield 2 shorter but enzymatically active forms of 12 kDa and 13 kDa.</text>
</comment>
<comment type="PTM">
    <molecule>Gag-Pro-Pol polyprotein</molecule>
    <text evidence="6">Myristoylated. Myristoylation of the matrix (MA) domain mediates the transport and binding of Gag polyproteins to the host plasma membrane and is required for the assembly of viral particles.</text>
</comment>
<comment type="PTM">
    <molecule>Gag-Pro-Pol polyprotein</molecule>
    <text evidence="5">Specific enzymatic cleavages in vivo yield mature proteins.</text>
</comment>
<comment type="miscellaneous">
    <molecule>Reverse transcriptase/ribonuclease H</molecule>
    <text evidence="11">The reverse transcriptase is an error-prone enzyme that lacks a proof-reading function. High mutations rate is a direct consequence of this characteristic. RT also displays frequent template switching leading to high recombination rate. Recombination mostly occurs between homologous regions of the two copackaged RNA genomes. If these two RNA molecules derive from different viral strains, reverse transcription will give rise to highly recombinated proviral DNAs.</text>
</comment>
<comment type="miscellaneous">
    <molecule>Isoform Gag-Pro-Pol polyprotein</molecule>
    <text evidence="18">Produced by -1 ribosomal frameshiftings between gag-pro and pro-pol.</text>
</comment>
<comment type="similarity">
    <text evidence="17">Belongs to the retroviral Pol polyprotein family.</text>
</comment>
<comment type="sequence caution" evidence="17">
    <conflict type="erroneous initiation">
        <sequence resource="EMBL-CDS" id="AAA89182"/>
    </conflict>
</comment>
<accession>P31623</accession>